<protein>
    <recommendedName>
        <fullName evidence="1">Checkpoint protein Hus1-like</fullName>
    </recommendedName>
</protein>
<feature type="chain" id="PRO_0000462466" description="Checkpoint protein Hus1-like">
    <location>
        <begin position="1"/>
        <end position="278"/>
    </location>
</feature>
<feature type="sequence conflict" description="In Ref. 1; AAD31693, 2; AAD22103 and 5; AER29909." evidence="5" ref="1 2 5">
    <original>E</original>
    <variation>D</variation>
    <location>
        <position position="185"/>
    </location>
</feature>
<reference evidence="7" key="1">
    <citation type="submission" date="1999-01" db="EMBL/GenBank/DDBJ databases">
        <title>Drosophila DNA damage checkpoint homologs.</title>
        <authorList>
            <person name="Brodsky M.H."/>
            <person name="Tsang G."/>
            <person name="Thelen M.P."/>
            <person name="Rubin G.M."/>
        </authorList>
    </citation>
    <scope>NUCLEOTIDE SEQUENCE [MRNA]</scope>
    <source>
        <tissue evidence="7">Ovary</tissue>
    </source>
</reference>
<reference evidence="6" key="2">
    <citation type="submission" date="1999-02" db="EMBL/GenBank/DDBJ databases">
        <title>cDNA Cloning of a Homolog for S. pombe hus1 from D. melanogaster.</title>
        <authorList>
            <person name="Dean F.B."/>
            <person name="O'Donnell M."/>
        </authorList>
    </citation>
    <scope>NUCLEOTIDE SEQUENCE [MRNA]</scope>
</reference>
<reference evidence="10" key="3">
    <citation type="journal article" date="2000" name="Science">
        <title>The genome sequence of Drosophila melanogaster.</title>
        <authorList>
            <person name="Adams M.D."/>
            <person name="Celniker S.E."/>
            <person name="Holt R.A."/>
            <person name="Evans C.A."/>
            <person name="Gocayne J.D."/>
            <person name="Amanatides P.G."/>
            <person name="Scherer S.E."/>
            <person name="Li P.W."/>
            <person name="Hoskins R.A."/>
            <person name="Galle R.F."/>
            <person name="George R.A."/>
            <person name="Lewis S.E."/>
            <person name="Richards S."/>
            <person name="Ashburner M."/>
            <person name="Henderson S.N."/>
            <person name="Sutton G.G."/>
            <person name="Wortman J.R."/>
            <person name="Yandell M.D."/>
            <person name="Zhang Q."/>
            <person name="Chen L.X."/>
            <person name="Brandon R.C."/>
            <person name="Rogers Y.-H.C."/>
            <person name="Blazej R.G."/>
            <person name="Champe M."/>
            <person name="Pfeiffer B.D."/>
            <person name="Wan K.H."/>
            <person name="Doyle C."/>
            <person name="Baxter E.G."/>
            <person name="Helt G."/>
            <person name="Nelson C.R."/>
            <person name="Miklos G.L.G."/>
            <person name="Abril J.F."/>
            <person name="Agbayani A."/>
            <person name="An H.-J."/>
            <person name="Andrews-Pfannkoch C."/>
            <person name="Baldwin D."/>
            <person name="Ballew R.M."/>
            <person name="Basu A."/>
            <person name="Baxendale J."/>
            <person name="Bayraktaroglu L."/>
            <person name="Beasley E.M."/>
            <person name="Beeson K.Y."/>
            <person name="Benos P.V."/>
            <person name="Berman B.P."/>
            <person name="Bhandari D."/>
            <person name="Bolshakov S."/>
            <person name="Borkova D."/>
            <person name="Botchan M.R."/>
            <person name="Bouck J."/>
            <person name="Brokstein P."/>
            <person name="Brottier P."/>
            <person name="Burtis K.C."/>
            <person name="Busam D.A."/>
            <person name="Butler H."/>
            <person name="Cadieu E."/>
            <person name="Center A."/>
            <person name="Chandra I."/>
            <person name="Cherry J.M."/>
            <person name="Cawley S."/>
            <person name="Dahlke C."/>
            <person name="Davenport L.B."/>
            <person name="Davies P."/>
            <person name="de Pablos B."/>
            <person name="Delcher A."/>
            <person name="Deng Z."/>
            <person name="Mays A.D."/>
            <person name="Dew I."/>
            <person name="Dietz S.M."/>
            <person name="Dodson K."/>
            <person name="Doup L.E."/>
            <person name="Downes M."/>
            <person name="Dugan-Rocha S."/>
            <person name="Dunkov B.C."/>
            <person name="Dunn P."/>
            <person name="Durbin K.J."/>
            <person name="Evangelista C.C."/>
            <person name="Ferraz C."/>
            <person name="Ferriera S."/>
            <person name="Fleischmann W."/>
            <person name="Fosler C."/>
            <person name="Gabrielian A.E."/>
            <person name="Garg N.S."/>
            <person name="Gelbart W.M."/>
            <person name="Glasser K."/>
            <person name="Glodek A."/>
            <person name="Gong F."/>
            <person name="Gorrell J.H."/>
            <person name="Gu Z."/>
            <person name="Guan P."/>
            <person name="Harris M."/>
            <person name="Harris N.L."/>
            <person name="Harvey D.A."/>
            <person name="Heiman T.J."/>
            <person name="Hernandez J.R."/>
            <person name="Houck J."/>
            <person name="Hostin D."/>
            <person name="Houston K.A."/>
            <person name="Howland T.J."/>
            <person name="Wei M.-H."/>
            <person name="Ibegwam C."/>
            <person name="Jalali M."/>
            <person name="Kalush F."/>
            <person name="Karpen G.H."/>
            <person name="Ke Z."/>
            <person name="Kennison J.A."/>
            <person name="Ketchum K.A."/>
            <person name="Kimmel B.E."/>
            <person name="Kodira C.D."/>
            <person name="Kraft C.L."/>
            <person name="Kravitz S."/>
            <person name="Kulp D."/>
            <person name="Lai Z."/>
            <person name="Lasko P."/>
            <person name="Lei Y."/>
            <person name="Levitsky A.A."/>
            <person name="Li J.H."/>
            <person name="Li Z."/>
            <person name="Liang Y."/>
            <person name="Lin X."/>
            <person name="Liu X."/>
            <person name="Mattei B."/>
            <person name="McIntosh T.C."/>
            <person name="McLeod M.P."/>
            <person name="McPherson D."/>
            <person name="Merkulov G."/>
            <person name="Milshina N.V."/>
            <person name="Mobarry C."/>
            <person name="Morris J."/>
            <person name="Moshrefi A."/>
            <person name="Mount S.M."/>
            <person name="Moy M."/>
            <person name="Murphy B."/>
            <person name="Murphy L."/>
            <person name="Muzny D.M."/>
            <person name="Nelson D.L."/>
            <person name="Nelson D.R."/>
            <person name="Nelson K.A."/>
            <person name="Nixon K."/>
            <person name="Nusskern D.R."/>
            <person name="Pacleb J.M."/>
            <person name="Palazzolo M."/>
            <person name="Pittman G.S."/>
            <person name="Pan S."/>
            <person name="Pollard J."/>
            <person name="Puri V."/>
            <person name="Reese M.G."/>
            <person name="Reinert K."/>
            <person name="Remington K."/>
            <person name="Saunders R.D.C."/>
            <person name="Scheeler F."/>
            <person name="Shen H."/>
            <person name="Shue B.C."/>
            <person name="Siden-Kiamos I."/>
            <person name="Simpson M."/>
            <person name="Skupski M.P."/>
            <person name="Smith T.J."/>
            <person name="Spier E."/>
            <person name="Spradling A.C."/>
            <person name="Stapleton M."/>
            <person name="Strong R."/>
            <person name="Sun E."/>
            <person name="Svirskas R."/>
            <person name="Tector C."/>
            <person name="Turner R."/>
            <person name="Venter E."/>
            <person name="Wang A.H."/>
            <person name="Wang X."/>
            <person name="Wang Z.-Y."/>
            <person name="Wassarman D.A."/>
            <person name="Weinstock G.M."/>
            <person name="Weissenbach J."/>
            <person name="Williams S.M."/>
            <person name="Woodage T."/>
            <person name="Worley K.C."/>
            <person name="Wu D."/>
            <person name="Yang S."/>
            <person name="Yao Q.A."/>
            <person name="Ye J."/>
            <person name="Yeh R.-F."/>
            <person name="Zaveri J.S."/>
            <person name="Zhan M."/>
            <person name="Zhang G."/>
            <person name="Zhao Q."/>
            <person name="Zheng L."/>
            <person name="Zheng X.H."/>
            <person name="Zhong F.N."/>
            <person name="Zhong W."/>
            <person name="Zhou X."/>
            <person name="Zhu S.C."/>
            <person name="Zhu X."/>
            <person name="Smith H.O."/>
            <person name="Gibbs R.A."/>
            <person name="Myers E.W."/>
            <person name="Rubin G.M."/>
            <person name="Venter J.C."/>
        </authorList>
    </citation>
    <scope>NUCLEOTIDE SEQUENCE [LARGE SCALE GENOMIC DNA]</scope>
    <source>
        <strain evidence="10">Berkeley</strain>
    </source>
</reference>
<reference evidence="10" key="4">
    <citation type="journal article" date="2002" name="Genome Biol.">
        <title>Annotation of the Drosophila melanogaster euchromatic genome: a systematic review.</title>
        <authorList>
            <person name="Misra S."/>
            <person name="Crosby M.A."/>
            <person name="Mungall C.J."/>
            <person name="Matthews B.B."/>
            <person name="Campbell K.S."/>
            <person name="Hradecky P."/>
            <person name="Huang Y."/>
            <person name="Kaminker J.S."/>
            <person name="Millburn G.H."/>
            <person name="Prochnik S.E."/>
            <person name="Smith C.D."/>
            <person name="Tupy J.L."/>
            <person name="Whitfield E.J."/>
            <person name="Bayraktaroglu L."/>
            <person name="Berman B.P."/>
            <person name="Bettencourt B.R."/>
            <person name="Celniker S.E."/>
            <person name="de Grey A.D.N.J."/>
            <person name="Drysdale R.A."/>
            <person name="Harris N.L."/>
            <person name="Richter J."/>
            <person name="Russo S."/>
            <person name="Schroeder A.J."/>
            <person name="Shu S.Q."/>
            <person name="Stapleton M."/>
            <person name="Yamada C."/>
            <person name="Ashburner M."/>
            <person name="Gelbart W.M."/>
            <person name="Rubin G.M."/>
            <person name="Lewis S.E."/>
        </authorList>
    </citation>
    <scope>GENOME REANNOTATION</scope>
    <source>
        <strain evidence="10">Berkeley</strain>
    </source>
</reference>
<reference evidence="8" key="5">
    <citation type="submission" date="2011-10" db="EMBL/GenBank/DDBJ databases">
        <authorList>
            <person name="Carlson J."/>
            <person name="Booth B."/>
            <person name="Frise E."/>
            <person name="Park S."/>
            <person name="Wan K."/>
            <person name="Yu C."/>
            <person name="Celniker S."/>
        </authorList>
    </citation>
    <scope>NUCLEOTIDE SEQUENCE [LARGE SCALE MRNA]</scope>
</reference>
<reference evidence="5" key="6">
    <citation type="journal article" date="2007" name="J. Cell Sci.">
        <title>An essential role for Drosophila hus1 in somatic and meiotic DNA damage responses.</title>
        <authorList>
            <person name="Abdu U."/>
            <person name="Klovstad M."/>
            <person name="Butin-Israeli V."/>
            <person name="Bakhrat A."/>
            <person name="Schuepbach T."/>
        </authorList>
    </citation>
    <scope>FUNCTION</scope>
    <scope>INTERACTION WITH RAD1 AND RAD9</scope>
    <scope>TISSUE SPECIFICITY</scope>
    <scope>DISRUPTION PHENOTYPE</scope>
</reference>
<reference evidence="5" key="7">
    <citation type="journal article" date="2009" name="Mech. Dev.">
        <title>The Drosophila hus1 gene is required for homologous recombination repair during meiosis.</title>
        <authorList>
            <person name="Peretz G."/>
            <person name="Arie L.G."/>
            <person name="Bakhrat A."/>
            <person name="Abdu U."/>
        </authorList>
    </citation>
    <scope>FUNCTION</scope>
    <scope>DISRUPTION PHENOTYPE</scope>
</reference>
<reference evidence="5" key="8">
    <citation type="journal article" date="2012" name="PLoS ONE">
        <title>Localization of the Drosophila Rad9 protein to the nuclear membrane is regulated by the C-terminal region and is affected in the meiotic checkpoint.</title>
        <authorList>
            <person name="Kadir R."/>
            <person name="Bakhrat A."/>
            <person name="Tokarsky R."/>
            <person name="Abdu U."/>
        </authorList>
    </citation>
    <scope>FUNCTION</scope>
    <scope>INTERACTION WITH RAD9</scope>
    <scope>SUBCELLULAR LOCATION</scope>
</reference>
<organism evidence="10">
    <name type="scientific">Drosophila melanogaster</name>
    <name type="common">Fruit fly</name>
    <dbReference type="NCBI Taxonomy" id="7227"/>
    <lineage>
        <taxon>Eukaryota</taxon>
        <taxon>Metazoa</taxon>
        <taxon>Ecdysozoa</taxon>
        <taxon>Arthropoda</taxon>
        <taxon>Hexapoda</taxon>
        <taxon>Insecta</taxon>
        <taxon>Pterygota</taxon>
        <taxon>Neoptera</taxon>
        <taxon>Endopterygota</taxon>
        <taxon>Diptera</taxon>
        <taxon>Brachycera</taxon>
        <taxon>Muscomorpha</taxon>
        <taxon>Ephydroidea</taxon>
        <taxon>Drosophilidae</taxon>
        <taxon>Drosophila</taxon>
        <taxon>Sophophora</taxon>
    </lineage>
</organism>
<accession>Q9VN60</accession>
<accession>Q9XTN5</accession>
<keyword id="KW-0963">Cytoplasm</keyword>
<keyword id="KW-0539">Nucleus</keyword>
<keyword id="KW-1185">Reference proteome</keyword>
<dbReference type="EMBL" id="AF131069">
    <property type="protein sequence ID" value="AAD22103.1"/>
    <property type="molecule type" value="mRNA"/>
</dbReference>
<dbReference type="EMBL" id="AF124504">
    <property type="protein sequence ID" value="AAD31693.1"/>
    <property type="molecule type" value="mRNA"/>
</dbReference>
<dbReference type="EMBL" id="AE014297">
    <property type="protein sequence ID" value="AAF52090.1"/>
    <property type="molecule type" value="Genomic_DNA"/>
</dbReference>
<dbReference type="EMBL" id="AE014297">
    <property type="protein sequence ID" value="AGB95650.1"/>
    <property type="molecule type" value="Genomic_DNA"/>
</dbReference>
<dbReference type="EMBL" id="BT132719">
    <property type="protein sequence ID" value="AER29909.1"/>
    <property type="molecule type" value="mRNA"/>
</dbReference>
<dbReference type="RefSeq" id="NP_001262267.1">
    <property type="nucleotide sequence ID" value="NM_001275338.2"/>
</dbReference>
<dbReference type="RefSeq" id="NP_477426.1">
    <property type="nucleotide sequence ID" value="NM_058078.4"/>
</dbReference>
<dbReference type="SMR" id="Q9VN60"/>
<dbReference type="FunCoup" id="Q9VN60">
    <property type="interactions" value="1372"/>
</dbReference>
<dbReference type="IntAct" id="Q9VN60">
    <property type="interactions" value="3"/>
</dbReference>
<dbReference type="STRING" id="7227.FBpp0306925"/>
<dbReference type="PaxDb" id="7227-FBpp0078516"/>
<dbReference type="EnsemblMetazoa" id="FBtr0078876">
    <property type="protein sequence ID" value="FBpp0078516"/>
    <property type="gene ID" value="FBgn0026417"/>
</dbReference>
<dbReference type="EnsemblMetazoa" id="FBtr0334904">
    <property type="protein sequence ID" value="FBpp0306925"/>
    <property type="gene ID" value="FBgn0026417"/>
</dbReference>
<dbReference type="GeneID" id="40598"/>
<dbReference type="KEGG" id="dme:Dmel_CG2525"/>
<dbReference type="UCSC" id="CG2525-RA">
    <property type="organism name" value="d. melanogaster"/>
</dbReference>
<dbReference type="AGR" id="FB:FBgn0026417"/>
<dbReference type="CTD" id="40598"/>
<dbReference type="FlyBase" id="FBgn0026417">
    <property type="gene designation" value="Hus1-like"/>
</dbReference>
<dbReference type="VEuPathDB" id="VectorBase:FBgn0026417"/>
<dbReference type="eggNOG" id="KOG3999">
    <property type="taxonomic scope" value="Eukaryota"/>
</dbReference>
<dbReference type="GeneTree" id="ENSGT00390000000706"/>
<dbReference type="HOGENOM" id="CLU_035754_1_0_1"/>
<dbReference type="OMA" id="VCWMRLE"/>
<dbReference type="OrthoDB" id="10063861at2759"/>
<dbReference type="Reactome" id="R-DME-176187">
    <property type="pathway name" value="Activation of ATR in response to replication stress"/>
</dbReference>
<dbReference type="Reactome" id="R-DME-5693607">
    <property type="pathway name" value="Processing of DNA double-strand break ends"/>
</dbReference>
<dbReference type="Reactome" id="R-DME-6804756">
    <property type="pathway name" value="Regulation of TP53 Activity through Phosphorylation"/>
</dbReference>
<dbReference type="Reactome" id="R-DME-69473">
    <property type="pathway name" value="G2/M DNA damage checkpoint"/>
</dbReference>
<dbReference type="BioGRID-ORCS" id="40598">
    <property type="hits" value="0 hits in 3 CRISPR screens"/>
</dbReference>
<dbReference type="Proteomes" id="UP000000803">
    <property type="component" value="Chromosome 3R"/>
</dbReference>
<dbReference type="Bgee" id="FBgn0026417">
    <property type="expression patterns" value="Expressed in saliva-secreting gland and 34 other cell types or tissues"/>
</dbReference>
<dbReference type="ExpressionAtlas" id="Q9XTN5">
    <property type="expression patterns" value="baseline and differential"/>
</dbReference>
<dbReference type="GO" id="GO:0030896">
    <property type="term" value="C:checkpoint clamp complex"/>
    <property type="evidence" value="ECO:0000314"/>
    <property type="project" value="FlyBase"/>
</dbReference>
<dbReference type="GO" id="GO:0005737">
    <property type="term" value="C:cytoplasm"/>
    <property type="evidence" value="ECO:0000314"/>
    <property type="project" value="FlyBase"/>
</dbReference>
<dbReference type="GO" id="GO:0005730">
    <property type="term" value="C:nucleolus"/>
    <property type="evidence" value="ECO:0007669"/>
    <property type="project" value="InterPro"/>
</dbReference>
<dbReference type="GO" id="GO:0035861">
    <property type="term" value="C:site of double-strand break"/>
    <property type="evidence" value="ECO:0000318"/>
    <property type="project" value="GO_Central"/>
</dbReference>
<dbReference type="GO" id="GO:0000724">
    <property type="term" value="P:double-strand break repair via homologous recombination"/>
    <property type="evidence" value="ECO:0000315"/>
    <property type="project" value="FlyBase"/>
</dbReference>
<dbReference type="GO" id="GO:0035038">
    <property type="term" value="P:female pronucleus assembly"/>
    <property type="evidence" value="ECO:0000315"/>
    <property type="project" value="FlyBase"/>
</dbReference>
<dbReference type="GO" id="GO:0044778">
    <property type="term" value="P:meiotic DNA integrity checkpoint signaling"/>
    <property type="evidence" value="ECO:0000315"/>
    <property type="project" value="FlyBase"/>
</dbReference>
<dbReference type="GO" id="GO:0051598">
    <property type="term" value="P:meiotic recombination checkpoint signaling"/>
    <property type="evidence" value="ECO:0000315"/>
    <property type="project" value="FlyBase"/>
</dbReference>
<dbReference type="GO" id="GO:0044773">
    <property type="term" value="P:mitotic DNA damage checkpoint signaling"/>
    <property type="evidence" value="ECO:0000315"/>
    <property type="project" value="FlyBase"/>
</dbReference>
<dbReference type="GO" id="GO:0033314">
    <property type="term" value="P:mitotic DNA replication checkpoint signaling"/>
    <property type="evidence" value="ECO:0000318"/>
    <property type="project" value="GO_Central"/>
</dbReference>
<dbReference type="GO" id="GO:0031573">
    <property type="term" value="P:mitotic intra-S DNA damage checkpoint signaling"/>
    <property type="evidence" value="ECO:0000318"/>
    <property type="project" value="GO_Central"/>
</dbReference>
<dbReference type="GO" id="GO:0006289">
    <property type="term" value="P:nucleotide-excision repair"/>
    <property type="evidence" value="ECO:0000318"/>
    <property type="project" value="GO_Central"/>
</dbReference>
<dbReference type="GO" id="GO:0030717">
    <property type="term" value="P:oocyte karyosome formation"/>
    <property type="evidence" value="ECO:0000315"/>
    <property type="project" value="FlyBase"/>
</dbReference>
<dbReference type="GO" id="GO:0030720">
    <property type="term" value="P:oocyte localization involved in germarium-derived egg chamber formation"/>
    <property type="evidence" value="ECO:0000315"/>
    <property type="project" value="FlyBase"/>
</dbReference>
<dbReference type="GO" id="GO:0070194">
    <property type="term" value="P:synaptonemal complex disassembly"/>
    <property type="evidence" value="ECO:0000315"/>
    <property type="project" value="FlyBase"/>
</dbReference>
<dbReference type="GO" id="GO:0000723">
    <property type="term" value="P:telomere maintenance"/>
    <property type="evidence" value="ECO:0000318"/>
    <property type="project" value="GO_Central"/>
</dbReference>
<dbReference type="FunFam" id="3.70.10.10:FF:000037">
    <property type="entry name" value="Checkpoint protein"/>
    <property type="match status" value="1"/>
</dbReference>
<dbReference type="Gene3D" id="3.70.10.10">
    <property type="match status" value="1"/>
</dbReference>
<dbReference type="InterPro" id="IPR016580">
    <property type="entry name" value="Cell_cycle_HUS1"/>
</dbReference>
<dbReference type="InterPro" id="IPR007150">
    <property type="entry name" value="Hus1/Mec3"/>
</dbReference>
<dbReference type="PANTHER" id="PTHR12900:SF0">
    <property type="entry name" value="CHECKPOINT PROTEIN"/>
    <property type="match status" value="1"/>
</dbReference>
<dbReference type="PANTHER" id="PTHR12900">
    <property type="entry name" value="MITOTIC AND DNA DAMAGE CHECKPOINT PROTEIN HUS1"/>
    <property type="match status" value="1"/>
</dbReference>
<dbReference type="Pfam" id="PF04005">
    <property type="entry name" value="Hus1"/>
    <property type="match status" value="1"/>
</dbReference>
<dbReference type="PIRSF" id="PIRSF011312">
    <property type="entry name" value="Cell_cycle_HUS1"/>
    <property type="match status" value="1"/>
</dbReference>
<comment type="function">
    <text evidence="2 3 4">Component of the 9-1-1 checkpoint clamp complex (PubMed:17327271, PubMed:22666434). Involved in both meiotic and somatic DNA damage responses (PubMed:17327271). Essential for activation of the meiotic checkpoint in response to double-strand DNA breaks; required for the S-phase checkpoint but not the G2-M phase checkpoint (PubMed:17327271). Involved in double strand break repair by homologous recombination during meiosis; influences the organization of chromosomal DNA in the meiotic nucleus (PubMed:17327271, PubMed:19501158).</text>
</comment>
<comment type="subunit">
    <text evidence="2 4">Component of the 9-1-1 checkpoint clamp complex consisting of Rad9 isoform A, Rad1 and Hus1-like; the interactions with Rad1 and Rad9 are direct (PubMed:17327271, PubMed:22666434). This complex probably also forms with Rad9 isoform B, however 9-1-1 complex containing Rad9 isoform A localizes to the nuclear periphery (PubMed:22666434).</text>
</comment>
<comment type="subcellular location">
    <subcellularLocation>
        <location evidence="4">Cytoplasm</location>
    </subcellularLocation>
    <subcellularLocation>
        <location evidence="4">Nucleus envelope</location>
    </subcellularLocation>
    <text evidence="4">Localizes to the nuclear periphery when part of the 9-1-1 complex with Rad9 isoform A and Rad1.</text>
</comment>
<comment type="tissue specificity">
    <text evidence="2">Expressed in ovary.</text>
</comment>
<comment type="disruption phenotype">
    <text evidence="2 3">Viable but females are sterile (PubMed:17327271). Aberrant formation of the karyosome, the compact spherical cluster of condensed chromosomes that forms in the oocyte nucleus during meiotic prophase (PubMed:17327271). Aberrant synoptenemal complex disassembly in the oocyte; possibly contributing to the karyosome phenotype (PubMed:19501158). The karyosome and synaptonemal complex phenotypes are caused by persistent DNA double stranded breaks that activate a CHK2 meiotic checkpoint pathway (PubMed:19501158). Activation of the meiotic checkpoint leads to defective oocyte localization (PubMed:19501158). Mutant flies are sensitive to genotoxic stress caused by hydroxyurea and methyl methanesulfonate, but not by X-ray irradiation (PubMed:17327271). When combined with disruption of Brca2 females do not lay eggs and have reduced size ovaries with apoptotic egg chambers (PubMed:19501158).</text>
</comment>
<comment type="similarity">
    <text evidence="1">Belongs to the HUS1 family.</text>
</comment>
<evidence type="ECO:0000255" key="1">
    <source>
        <dbReference type="PIRNR" id="PIRNR011312"/>
    </source>
</evidence>
<evidence type="ECO:0000269" key="2">
    <source>
    </source>
</evidence>
<evidence type="ECO:0000269" key="3">
    <source>
    </source>
</evidence>
<evidence type="ECO:0000269" key="4">
    <source>
    </source>
</evidence>
<evidence type="ECO:0000305" key="5"/>
<evidence type="ECO:0000312" key="6">
    <source>
        <dbReference type="EMBL" id="AAD22103.1"/>
    </source>
</evidence>
<evidence type="ECO:0000312" key="7">
    <source>
        <dbReference type="EMBL" id="AAD31693.1"/>
    </source>
</evidence>
<evidence type="ECO:0000312" key="8">
    <source>
        <dbReference type="EMBL" id="AER29909.1"/>
    </source>
</evidence>
<evidence type="ECO:0000312" key="9">
    <source>
        <dbReference type="FlyBase" id="FBgn0026417"/>
    </source>
</evidence>
<evidence type="ECO:0000312" key="10">
    <source>
        <dbReference type="Proteomes" id="UP000000803"/>
    </source>
</evidence>
<gene>
    <name evidence="9" type="primary">Hus1-like</name>
    <name evidence="9" type="synonym">Hus1</name>
    <name evidence="9" type="ORF">CG2525</name>
</gene>
<name>HUS1_DROME</name>
<sequence>MKFRALMQDPLYMKEFQAIVATLTKLAKDCVMILGSRQMHFIVNEDQSSAASPLVWAGITAEEYFPEYRMEAAHPDQEYIVLGVSSANLGRALSVLRGGGVNSCKLKLQRIQFPCISVIASVLTSSSTEAREVVHDVPVTIIPGSDWSAYVVPRVPNSQLALGLPSLRLLKSLIDKLKNISPSLEFQVNVDGELNVIATSEMSTVTSRFQKLLIRTVSGSQQEASCSVDSRKASAFFGALQLPNEELTIGIDREHSIHLQIDVRQDVVLHSILPAVCM</sequence>
<proteinExistence type="evidence at protein level"/>